<proteinExistence type="evidence at protein level"/>
<name>TOX1_OXYLI</name>
<protein>
    <recommendedName>
        <fullName>Omega-oxotoxin-Ol1a</fullName>
        <shortName>Omega-OXTX-Ol1a</shortName>
    </recommendedName>
    <alternativeName>
        <fullName>Oxytoxin-1</fullName>
        <shortName>OxyTx1</shortName>
    </alternativeName>
</protein>
<accession>P0C8M0</accession>
<sequence>DWECLPLHSSCDNDCVCCKNHHCHCPYSNVSKLEKWLPEWAKIPDALKRCSCQRNDKDGKINTCDKYKN</sequence>
<comment type="function">
    <text evidence="3">Weak blocker of vertebrate P/Q-, N- and L-type voltage-gated calcium channels (Cav1 and Cav2). Is both paralytic and lethal when injected into lepidopteran larvae. Is not toxic to mice.</text>
</comment>
<comment type="subcellular location">
    <subcellularLocation>
        <location evidence="3">Secreted</location>
    </subcellularLocation>
</comment>
<comment type="tissue specificity">
    <text evidence="3">Expressed by the venom gland.</text>
</comment>
<comment type="domain">
    <text evidence="4">The presence of a 'disulfide through disulfide knot' structurally defines this protein as a knottin.</text>
</comment>
<comment type="mass spectrometry"/>
<comment type="toxic dose">
    <text evidence="3">PD(50) is 5.0 +- 0.3 nmol/g on lepidopteran larvae (Spodoptera litura).</text>
</comment>
<comment type="miscellaneous">
    <text>The primary structure of the mature peptide is identical to that of omega-oxotoxin-Ot1a from Oxyopes takobius (AC P83288).</text>
</comment>
<comment type="similarity">
    <text evidence="4">Belongs to the spiderine family. Spiderine subfamily.</text>
</comment>
<feature type="chain" id="PRO_0000359431" description="Omega-oxotoxin-Ol1a">
    <location>
        <begin position="1"/>
        <end position="69"/>
    </location>
</feature>
<feature type="domain" description="Oxytoxin-type inhibitor cystine knot (ICK)" evidence="2">
    <location>
        <begin position="1"/>
        <end position="68"/>
    </location>
</feature>
<feature type="modified residue" description="Asparagine amide" evidence="3">
    <location>
        <position position="69"/>
    </location>
</feature>
<feature type="disulfide bond" evidence="1">
    <location>
        <begin position="4"/>
        <end position="18"/>
    </location>
</feature>
<feature type="disulfide bond" evidence="1">
    <location>
        <begin position="11"/>
        <end position="23"/>
    </location>
</feature>
<feature type="disulfide bond" evidence="1">
    <location>
        <begin position="15"/>
        <end position="64"/>
    </location>
</feature>
<feature type="disulfide bond" evidence="1">
    <location>
        <begin position="17"/>
        <end position="52"/>
    </location>
</feature>
<feature type="disulfide bond" evidence="1">
    <location>
        <begin position="25"/>
        <end position="50"/>
    </location>
</feature>
<reference key="1">
    <citation type="journal article" date="2008" name="Toxicon">
        <title>Biochemical characterization of cysteine-rich peptides from Oxyopes sp. venom that block calcium ion channels.</title>
        <authorList>
            <person name="Villegas E."/>
            <person name="Adachi-Akahane S."/>
            <person name="Bosmans F."/>
            <person name="Tytgat J."/>
            <person name="Nakajima T."/>
            <person name="Corzo G."/>
        </authorList>
    </citation>
    <scope>PROTEIN SEQUENCE</scope>
    <scope>FUNCTION</scope>
    <scope>SUBCELLULAR LOCATION</scope>
    <scope>TISSUE SPECIFICITY</scope>
    <scope>MASS SPECTROMETRY</scope>
    <scope>AMIDATION AT ASN-69</scope>
    <scope>TOXIC DOSE</scope>
    <source>
        <tissue>Venom</tissue>
    </source>
</reference>
<organism>
    <name type="scientific">Oxyopes lineatus</name>
    <name type="common">Lynx spider</name>
    <dbReference type="NCBI Taxonomy" id="366495"/>
    <lineage>
        <taxon>Eukaryota</taxon>
        <taxon>Metazoa</taxon>
        <taxon>Ecdysozoa</taxon>
        <taxon>Arthropoda</taxon>
        <taxon>Chelicerata</taxon>
        <taxon>Arachnida</taxon>
        <taxon>Araneae</taxon>
        <taxon>Araneomorphae</taxon>
        <taxon>Entelegynae</taxon>
        <taxon>Lycosoidea</taxon>
        <taxon>Oxyopidae</taxon>
        <taxon>Oxyopes</taxon>
    </lineage>
</organism>
<evidence type="ECO:0000250" key="1">
    <source>
        <dbReference type="UniProtKB" id="P86716"/>
    </source>
</evidence>
<evidence type="ECO:0000255" key="2">
    <source>
        <dbReference type="PROSITE-ProRule" id="PRU01208"/>
    </source>
</evidence>
<evidence type="ECO:0000269" key="3">
    <source>
    </source>
</evidence>
<evidence type="ECO:0000305" key="4"/>
<keyword id="KW-0027">Amidation</keyword>
<keyword id="KW-0108">Calcium channel impairing toxin</keyword>
<keyword id="KW-0903">Direct protein sequencing</keyword>
<keyword id="KW-1015">Disulfide bond</keyword>
<keyword id="KW-0872">Ion channel impairing toxin</keyword>
<keyword id="KW-0960">Knottin</keyword>
<keyword id="KW-0528">Neurotoxin</keyword>
<keyword id="KW-0964">Secreted</keyword>
<keyword id="KW-0800">Toxin</keyword>
<keyword id="KW-1218">Voltage-gated calcium channel impairing toxin</keyword>
<dbReference type="SMR" id="P0C8M0"/>
<dbReference type="ArachnoServer" id="AS000207">
    <property type="toxin name" value="omega-oxotoxin-Ol1a"/>
</dbReference>
<dbReference type="GO" id="GO:0005576">
    <property type="term" value="C:extracellular region"/>
    <property type="evidence" value="ECO:0007669"/>
    <property type="project" value="UniProtKB-SubCell"/>
</dbReference>
<dbReference type="GO" id="GO:0005246">
    <property type="term" value="F:calcium channel regulator activity"/>
    <property type="evidence" value="ECO:0007669"/>
    <property type="project" value="UniProtKB-KW"/>
</dbReference>
<dbReference type="GO" id="GO:0090729">
    <property type="term" value="F:toxin activity"/>
    <property type="evidence" value="ECO:0007669"/>
    <property type="project" value="UniProtKB-KW"/>
</dbReference>
<dbReference type="InterPro" id="IPR044061">
    <property type="entry name" value="OXYTX_ICK"/>
</dbReference>
<dbReference type="PROSITE" id="PS51861">
    <property type="entry name" value="OXYTX_ICK"/>
    <property type="match status" value="1"/>
</dbReference>